<accession>Q88X97</accession>
<accession>F9UNA1</accession>
<comment type="function">
    <text evidence="1">Channel that opens in response to stretch forces in the membrane lipid bilayer. May participate in the regulation of osmotic pressure changes within the cell.</text>
</comment>
<comment type="subunit">
    <text evidence="1">Homopentamer.</text>
</comment>
<comment type="subcellular location">
    <subcellularLocation>
        <location evidence="1">Cell membrane</location>
        <topology evidence="1">Multi-pass membrane protein</topology>
    </subcellularLocation>
</comment>
<comment type="similarity">
    <text evidence="1">Belongs to the MscL family.</text>
</comment>
<organism>
    <name type="scientific">Lactiplantibacillus plantarum (strain ATCC BAA-793 / NCIMB 8826 / WCFS1)</name>
    <name type="common">Lactobacillus plantarum</name>
    <dbReference type="NCBI Taxonomy" id="220668"/>
    <lineage>
        <taxon>Bacteria</taxon>
        <taxon>Bacillati</taxon>
        <taxon>Bacillota</taxon>
        <taxon>Bacilli</taxon>
        <taxon>Lactobacillales</taxon>
        <taxon>Lactobacillaceae</taxon>
        <taxon>Lactiplantibacillus</taxon>
    </lineage>
</organism>
<reference key="1">
    <citation type="journal article" date="2003" name="Proc. Natl. Acad. Sci. U.S.A.">
        <title>Complete genome sequence of Lactobacillus plantarum WCFS1.</title>
        <authorList>
            <person name="Kleerebezem M."/>
            <person name="Boekhorst J."/>
            <person name="van Kranenburg R."/>
            <person name="Molenaar D."/>
            <person name="Kuipers O.P."/>
            <person name="Leer R."/>
            <person name="Tarchini R."/>
            <person name="Peters S.A."/>
            <person name="Sandbrink H.M."/>
            <person name="Fiers M.W.E.J."/>
            <person name="Stiekema W."/>
            <person name="Klein Lankhorst R.M."/>
            <person name="Bron P.A."/>
            <person name="Hoffer S.M."/>
            <person name="Nierop Groot M.N."/>
            <person name="Kerkhoven R."/>
            <person name="De Vries M."/>
            <person name="Ursing B."/>
            <person name="De Vos W.M."/>
            <person name="Siezen R.J."/>
        </authorList>
    </citation>
    <scope>NUCLEOTIDE SEQUENCE [LARGE SCALE GENOMIC DNA]</scope>
    <source>
        <strain>ATCC BAA-793 / NCIMB 8826 / WCFS1</strain>
    </source>
</reference>
<reference key="2">
    <citation type="journal article" date="2012" name="J. Bacteriol.">
        <title>Complete resequencing and reannotation of the Lactobacillus plantarum WCFS1 genome.</title>
        <authorList>
            <person name="Siezen R.J."/>
            <person name="Francke C."/>
            <person name="Renckens B."/>
            <person name="Boekhorst J."/>
            <person name="Wels M."/>
            <person name="Kleerebezem M."/>
            <person name="van Hijum S.A."/>
        </authorList>
    </citation>
    <scope>NUCLEOTIDE SEQUENCE [LARGE SCALE GENOMIC DNA]</scope>
    <scope>GENOME REANNOTATION</scope>
    <source>
        <strain>ATCC BAA-793 / NCIMB 8826 / WCFS1</strain>
    </source>
</reference>
<protein>
    <recommendedName>
        <fullName evidence="1">Large-conductance mechanosensitive channel</fullName>
    </recommendedName>
</protein>
<keyword id="KW-1003">Cell membrane</keyword>
<keyword id="KW-0407">Ion channel</keyword>
<keyword id="KW-0406">Ion transport</keyword>
<keyword id="KW-0472">Membrane</keyword>
<keyword id="KW-1185">Reference proteome</keyword>
<keyword id="KW-0812">Transmembrane</keyword>
<keyword id="KW-1133">Transmembrane helix</keyword>
<keyword id="KW-0813">Transport</keyword>
<sequence>MIKEFKEFIARGNVIDLAVGVIIGSAFTAIVKSLTDNLINPLIGIFLGKVDLSNLKFSIGDATFKYGSFLNAIINFFIVAIVVFILVKIINKVVKNEPEEPEEEEVDVSAQYLEEIRDLLKEQAKK</sequence>
<evidence type="ECO:0000255" key="1">
    <source>
        <dbReference type="HAMAP-Rule" id="MF_00115"/>
    </source>
</evidence>
<feature type="chain" id="PRO_0000192446" description="Large-conductance mechanosensitive channel">
    <location>
        <begin position="1"/>
        <end position="126"/>
    </location>
</feature>
<feature type="transmembrane region" description="Helical" evidence="1">
    <location>
        <begin position="14"/>
        <end position="34"/>
    </location>
</feature>
<feature type="transmembrane region" description="Helical" evidence="1">
    <location>
        <begin position="67"/>
        <end position="87"/>
    </location>
</feature>
<proteinExistence type="inferred from homology"/>
<name>MSCL_LACPL</name>
<gene>
    <name evidence="1" type="primary">mscL</name>
    <name type="ordered locus">lp_1330</name>
</gene>
<dbReference type="EMBL" id="AL935263">
    <property type="protein sequence ID" value="CCC78690.1"/>
    <property type="molecule type" value="Genomic_DNA"/>
</dbReference>
<dbReference type="RefSeq" id="WP_003643168.1">
    <property type="nucleotide sequence ID" value="NC_004567.2"/>
</dbReference>
<dbReference type="RefSeq" id="YP_004889204.1">
    <property type="nucleotide sequence ID" value="NC_004567.2"/>
</dbReference>
<dbReference type="SMR" id="Q88X97"/>
<dbReference type="STRING" id="220668.lp_1330"/>
<dbReference type="EnsemblBacteria" id="CCC78690">
    <property type="protein sequence ID" value="CCC78690"/>
    <property type="gene ID" value="lp_1330"/>
</dbReference>
<dbReference type="GeneID" id="77217789"/>
<dbReference type="KEGG" id="lpl:lp_1330"/>
<dbReference type="PATRIC" id="fig|220668.9.peg.1122"/>
<dbReference type="eggNOG" id="COG1970">
    <property type="taxonomic scope" value="Bacteria"/>
</dbReference>
<dbReference type="HOGENOM" id="CLU_095787_0_0_9"/>
<dbReference type="OrthoDB" id="9810350at2"/>
<dbReference type="PhylomeDB" id="Q88X97"/>
<dbReference type="Proteomes" id="UP000000432">
    <property type="component" value="Chromosome"/>
</dbReference>
<dbReference type="GO" id="GO:0005886">
    <property type="term" value="C:plasma membrane"/>
    <property type="evidence" value="ECO:0007669"/>
    <property type="project" value="UniProtKB-SubCell"/>
</dbReference>
<dbReference type="GO" id="GO:0008381">
    <property type="term" value="F:mechanosensitive monoatomic ion channel activity"/>
    <property type="evidence" value="ECO:0007669"/>
    <property type="project" value="UniProtKB-UniRule"/>
</dbReference>
<dbReference type="Gene3D" id="1.10.1200.120">
    <property type="entry name" value="Large-conductance mechanosensitive channel, MscL, domain 1"/>
    <property type="match status" value="1"/>
</dbReference>
<dbReference type="HAMAP" id="MF_00115">
    <property type="entry name" value="MscL"/>
    <property type="match status" value="1"/>
</dbReference>
<dbReference type="InterPro" id="IPR019823">
    <property type="entry name" value="Mechanosensitive_channel_CS"/>
</dbReference>
<dbReference type="InterPro" id="IPR001185">
    <property type="entry name" value="MS_channel"/>
</dbReference>
<dbReference type="InterPro" id="IPR037673">
    <property type="entry name" value="MSC/AndL"/>
</dbReference>
<dbReference type="InterPro" id="IPR036019">
    <property type="entry name" value="MscL_channel"/>
</dbReference>
<dbReference type="NCBIfam" id="TIGR00220">
    <property type="entry name" value="mscL"/>
    <property type="match status" value="1"/>
</dbReference>
<dbReference type="NCBIfam" id="NF001842">
    <property type="entry name" value="PRK00567.1-3"/>
    <property type="match status" value="1"/>
</dbReference>
<dbReference type="PANTHER" id="PTHR30266:SF2">
    <property type="entry name" value="LARGE-CONDUCTANCE MECHANOSENSITIVE CHANNEL"/>
    <property type="match status" value="1"/>
</dbReference>
<dbReference type="PANTHER" id="PTHR30266">
    <property type="entry name" value="MECHANOSENSITIVE CHANNEL MSCL"/>
    <property type="match status" value="1"/>
</dbReference>
<dbReference type="Pfam" id="PF01741">
    <property type="entry name" value="MscL"/>
    <property type="match status" value="1"/>
</dbReference>
<dbReference type="PRINTS" id="PR01264">
    <property type="entry name" value="MECHCHANNEL"/>
</dbReference>
<dbReference type="SUPFAM" id="SSF81330">
    <property type="entry name" value="Gated mechanosensitive channel"/>
    <property type="match status" value="1"/>
</dbReference>
<dbReference type="PROSITE" id="PS01327">
    <property type="entry name" value="MSCL"/>
    <property type="match status" value="1"/>
</dbReference>